<accession>B8CQT6</accession>
<proteinExistence type="inferred from homology"/>
<sequence>MDDNKRPLYLPFAGPAILEAPLINKGSAFTDEERIFFNLEGLLPHVIETIEEQASRAYDQYKNFTNDLDKHIYLRNIQDTNETLYYRLVQNHITEMMPIIYTPTVGMACERFSKDYRRNRGLFISYPNKDRIDDILNNSTRQKVKIIVVTDGERILGLGDQGIGGMGIPIGKLSLYTSCGGISPAYTLPITLDVGTDNPHLLEDPMYMGWRNPRIGGEEYTEFVEAFMQAVHRRWPDALIQFEDFAQKNAMPLLERYKDQYCCFNDDIQGTAAVTVGSLLAACKAAGTQLCQQRITFLGAGSAGCGIAEAIVAQMVSEGIAESQARKQVFMVDRWGMLQSNMPNLLPFQQKLAQDCDDITNWDNFSENISLLDVVNNAKPTILIGVSGAPGLFSEEIIKAMHSHCERPIVFPLSNPTSRVEATPKDILHWTKGQALVATGSPFEPVVVDDITYEIAQCNNSYIFPGIGLGVLAAGAERVSDAMLMASSRALAECSPLSINGEGSLLPQLEDIHKVSKHIAFAVAKVAIEEGHALPTSDELLSQAIEDNFWTAEYRRYKRTSF</sequence>
<name>MAO1_SHEPW</name>
<protein>
    <recommendedName>
        <fullName evidence="1">NAD-dependent malic enzyme</fullName>
        <shortName evidence="1">NAD-ME</shortName>
        <ecNumber evidence="1">1.1.1.38</ecNumber>
    </recommendedName>
</protein>
<comment type="catalytic activity">
    <reaction evidence="1">
        <text>(S)-malate + NAD(+) = pyruvate + CO2 + NADH</text>
        <dbReference type="Rhea" id="RHEA:12653"/>
        <dbReference type="ChEBI" id="CHEBI:15361"/>
        <dbReference type="ChEBI" id="CHEBI:15589"/>
        <dbReference type="ChEBI" id="CHEBI:16526"/>
        <dbReference type="ChEBI" id="CHEBI:57540"/>
        <dbReference type="ChEBI" id="CHEBI:57945"/>
        <dbReference type="EC" id="1.1.1.38"/>
    </reaction>
</comment>
<comment type="catalytic activity">
    <reaction evidence="1">
        <text>oxaloacetate + H(+) = pyruvate + CO2</text>
        <dbReference type="Rhea" id="RHEA:15641"/>
        <dbReference type="ChEBI" id="CHEBI:15361"/>
        <dbReference type="ChEBI" id="CHEBI:15378"/>
        <dbReference type="ChEBI" id="CHEBI:16452"/>
        <dbReference type="ChEBI" id="CHEBI:16526"/>
        <dbReference type="EC" id="1.1.1.38"/>
    </reaction>
</comment>
<comment type="cofactor">
    <cofactor evidence="1">
        <name>Mg(2+)</name>
        <dbReference type="ChEBI" id="CHEBI:18420"/>
    </cofactor>
    <cofactor evidence="1">
        <name>Mn(2+)</name>
        <dbReference type="ChEBI" id="CHEBI:29035"/>
    </cofactor>
    <text evidence="1">Divalent metal cations. Prefers magnesium or manganese.</text>
</comment>
<comment type="subunit">
    <text evidence="1">Homotetramer.</text>
</comment>
<comment type="similarity">
    <text evidence="1">Belongs to the malic enzymes family.</text>
</comment>
<feature type="chain" id="PRO_1000186011" description="NAD-dependent malic enzyme">
    <location>
        <begin position="1"/>
        <end position="562"/>
    </location>
</feature>
<feature type="active site" description="Proton donor" evidence="1">
    <location>
        <position position="101"/>
    </location>
</feature>
<feature type="active site" description="Proton acceptor" evidence="1">
    <location>
        <position position="172"/>
    </location>
</feature>
<feature type="binding site" evidence="1">
    <location>
        <position position="154"/>
    </location>
    <ligand>
        <name>NAD(+)</name>
        <dbReference type="ChEBI" id="CHEBI:57540"/>
    </ligand>
</feature>
<feature type="binding site" evidence="1">
    <location>
        <position position="243"/>
    </location>
    <ligand>
        <name>a divalent metal cation</name>
        <dbReference type="ChEBI" id="CHEBI:60240"/>
    </ligand>
</feature>
<feature type="binding site" evidence="1">
    <location>
        <position position="244"/>
    </location>
    <ligand>
        <name>a divalent metal cation</name>
        <dbReference type="ChEBI" id="CHEBI:60240"/>
    </ligand>
</feature>
<feature type="binding site" evidence="1">
    <location>
        <position position="267"/>
    </location>
    <ligand>
        <name>a divalent metal cation</name>
        <dbReference type="ChEBI" id="CHEBI:60240"/>
    </ligand>
</feature>
<feature type="binding site" evidence="1">
    <location>
        <position position="267"/>
    </location>
    <ligand>
        <name>NAD(+)</name>
        <dbReference type="ChEBI" id="CHEBI:57540"/>
    </ligand>
</feature>
<feature type="binding site" evidence="1">
    <location>
        <position position="415"/>
    </location>
    <ligand>
        <name>NAD(+)</name>
        <dbReference type="ChEBI" id="CHEBI:57540"/>
    </ligand>
</feature>
<feature type="site" description="Important for activity" evidence="1">
    <location>
        <position position="267"/>
    </location>
</feature>
<keyword id="KW-0479">Metal-binding</keyword>
<keyword id="KW-0520">NAD</keyword>
<keyword id="KW-0560">Oxidoreductase</keyword>
<organism>
    <name type="scientific">Shewanella piezotolerans (strain WP3 / JCM 13877)</name>
    <dbReference type="NCBI Taxonomy" id="225849"/>
    <lineage>
        <taxon>Bacteria</taxon>
        <taxon>Pseudomonadati</taxon>
        <taxon>Pseudomonadota</taxon>
        <taxon>Gammaproteobacteria</taxon>
        <taxon>Alteromonadales</taxon>
        <taxon>Shewanellaceae</taxon>
        <taxon>Shewanella</taxon>
    </lineage>
</organism>
<gene>
    <name evidence="1" type="primary">maeA</name>
    <name type="ordered locus">swp_3875</name>
</gene>
<evidence type="ECO:0000255" key="1">
    <source>
        <dbReference type="HAMAP-Rule" id="MF_01619"/>
    </source>
</evidence>
<reference key="1">
    <citation type="journal article" date="2008" name="PLoS ONE">
        <title>Environmental adaptation: genomic analysis of the piezotolerant and psychrotolerant deep-sea iron reducing bacterium Shewanella piezotolerans WP3.</title>
        <authorList>
            <person name="Wang F."/>
            <person name="Wang J."/>
            <person name="Jian H."/>
            <person name="Zhang B."/>
            <person name="Li S."/>
            <person name="Wang F."/>
            <person name="Zeng X."/>
            <person name="Gao L."/>
            <person name="Bartlett D.H."/>
            <person name="Yu J."/>
            <person name="Hu S."/>
            <person name="Xiao X."/>
        </authorList>
    </citation>
    <scope>NUCLEOTIDE SEQUENCE [LARGE SCALE GENOMIC DNA]</scope>
    <source>
        <strain>WP3 / JCM 13877</strain>
    </source>
</reference>
<dbReference type="EC" id="1.1.1.38" evidence="1"/>
<dbReference type="EMBL" id="CP000472">
    <property type="protein sequence ID" value="ACJ30552.1"/>
    <property type="molecule type" value="Genomic_DNA"/>
</dbReference>
<dbReference type="RefSeq" id="WP_020913894.1">
    <property type="nucleotide sequence ID" value="NC_011566.1"/>
</dbReference>
<dbReference type="SMR" id="B8CQT6"/>
<dbReference type="STRING" id="225849.swp_3875"/>
<dbReference type="KEGG" id="swp:swp_3875"/>
<dbReference type="eggNOG" id="COG0281">
    <property type="taxonomic scope" value="Bacteria"/>
</dbReference>
<dbReference type="HOGENOM" id="CLU_011405_5_2_6"/>
<dbReference type="OrthoDB" id="3314528at2"/>
<dbReference type="Proteomes" id="UP000000753">
    <property type="component" value="Chromosome"/>
</dbReference>
<dbReference type="GO" id="GO:0005829">
    <property type="term" value="C:cytosol"/>
    <property type="evidence" value="ECO:0007669"/>
    <property type="project" value="TreeGrafter"/>
</dbReference>
<dbReference type="GO" id="GO:0004471">
    <property type="term" value="F:malate dehydrogenase (decarboxylating) (NAD+) activity"/>
    <property type="evidence" value="ECO:0007669"/>
    <property type="project" value="UniProtKB-UniRule"/>
</dbReference>
<dbReference type="GO" id="GO:0046872">
    <property type="term" value="F:metal ion binding"/>
    <property type="evidence" value="ECO:0007669"/>
    <property type="project" value="UniProtKB-KW"/>
</dbReference>
<dbReference type="GO" id="GO:0051287">
    <property type="term" value="F:NAD binding"/>
    <property type="evidence" value="ECO:0007669"/>
    <property type="project" value="InterPro"/>
</dbReference>
<dbReference type="GO" id="GO:0008948">
    <property type="term" value="F:oxaloacetate decarboxylase activity"/>
    <property type="evidence" value="ECO:0007669"/>
    <property type="project" value="UniProtKB-UniRule"/>
</dbReference>
<dbReference type="GO" id="GO:0006108">
    <property type="term" value="P:malate metabolic process"/>
    <property type="evidence" value="ECO:0007669"/>
    <property type="project" value="TreeGrafter"/>
</dbReference>
<dbReference type="CDD" id="cd05312">
    <property type="entry name" value="NAD_bind_1_malic_enz"/>
    <property type="match status" value="1"/>
</dbReference>
<dbReference type="FunFam" id="3.40.50.10380:FF:000001">
    <property type="entry name" value="NAD-dependent malic enzyme"/>
    <property type="match status" value="1"/>
</dbReference>
<dbReference type="FunFam" id="3.40.50.720:FF:000055">
    <property type="entry name" value="NAD-dependent malic enzyme"/>
    <property type="match status" value="1"/>
</dbReference>
<dbReference type="Gene3D" id="3.40.50.10380">
    <property type="entry name" value="Malic enzyme, N-terminal domain"/>
    <property type="match status" value="1"/>
</dbReference>
<dbReference type="Gene3D" id="3.40.50.720">
    <property type="entry name" value="NAD(P)-binding Rossmann-like Domain"/>
    <property type="match status" value="1"/>
</dbReference>
<dbReference type="HAMAP" id="MF_01619">
    <property type="entry name" value="NAD_malic_enz"/>
    <property type="match status" value="1"/>
</dbReference>
<dbReference type="InterPro" id="IPR046346">
    <property type="entry name" value="Aminoacid_DH-like_N_sf"/>
</dbReference>
<dbReference type="InterPro" id="IPR015884">
    <property type="entry name" value="Malic_enzyme_CS"/>
</dbReference>
<dbReference type="InterPro" id="IPR012301">
    <property type="entry name" value="Malic_N_dom"/>
</dbReference>
<dbReference type="InterPro" id="IPR037062">
    <property type="entry name" value="Malic_N_dom_sf"/>
</dbReference>
<dbReference type="InterPro" id="IPR012302">
    <property type="entry name" value="Malic_NAD-bd"/>
</dbReference>
<dbReference type="InterPro" id="IPR001891">
    <property type="entry name" value="Malic_OxRdtase"/>
</dbReference>
<dbReference type="InterPro" id="IPR036291">
    <property type="entry name" value="NAD(P)-bd_dom_sf"/>
</dbReference>
<dbReference type="InterPro" id="IPR023667">
    <property type="entry name" value="NAD_malic_enz_proteobac"/>
</dbReference>
<dbReference type="NCBIfam" id="NF010052">
    <property type="entry name" value="PRK13529.1"/>
    <property type="match status" value="1"/>
</dbReference>
<dbReference type="PANTHER" id="PTHR23406">
    <property type="entry name" value="MALIC ENZYME-RELATED"/>
    <property type="match status" value="1"/>
</dbReference>
<dbReference type="PANTHER" id="PTHR23406:SF34">
    <property type="entry name" value="NAD-DEPENDENT MALIC ENZYME, MITOCHONDRIAL"/>
    <property type="match status" value="1"/>
</dbReference>
<dbReference type="Pfam" id="PF00390">
    <property type="entry name" value="malic"/>
    <property type="match status" value="1"/>
</dbReference>
<dbReference type="Pfam" id="PF03949">
    <property type="entry name" value="Malic_M"/>
    <property type="match status" value="1"/>
</dbReference>
<dbReference type="PIRSF" id="PIRSF000106">
    <property type="entry name" value="ME"/>
    <property type="match status" value="1"/>
</dbReference>
<dbReference type="PRINTS" id="PR00072">
    <property type="entry name" value="MALOXRDTASE"/>
</dbReference>
<dbReference type="SMART" id="SM01274">
    <property type="entry name" value="malic"/>
    <property type="match status" value="1"/>
</dbReference>
<dbReference type="SMART" id="SM00919">
    <property type="entry name" value="Malic_M"/>
    <property type="match status" value="1"/>
</dbReference>
<dbReference type="SUPFAM" id="SSF53223">
    <property type="entry name" value="Aminoacid dehydrogenase-like, N-terminal domain"/>
    <property type="match status" value="1"/>
</dbReference>
<dbReference type="SUPFAM" id="SSF51735">
    <property type="entry name" value="NAD(P)-binding Rossmann-fold domains"/>
    <property type="match status" value="1"/>
</dbReference>
<dbReference type="PROSITE" id="PS00331">
    <property type="entry name" value="MALIC_ENZYMES"/>
    <property type="match status" value="1"/>
</dbReference>